<comment type="function">
    <text evidence="1">Catalyzes the first step in hexosamine metabolism, converting fructose-6P into glucosamine-6P using glutamine as a nitrogen source.</text>
</comment>
<comment type="catalytic activity">
    <reaction evidence="1">
        <text>D-fructose 6-phosphate + L-glutamine = D-glucosamine 6-phosphate + L-glutamate</text>
        <dbReference type="Rhea" id="RHEA:13237"/>
        <dbReference type="ChEBI" id="CHEBI:29985"/>
        <dbReference type="ChEBI" id="CHEBI:58359"/>
        <dbReference type="ChEBI" id="CHEBI:58725"/>
        <dbReference type="ChEBI" id="CHEBI:61527"/>
        <dbReference type="EC" id="2.6.1.16"/>
    </reaction>
</comment>
<comment type="subunit">
    <text evidence="1">Homodimer.</text>
</comment>
<comment type="subcellular location">
    <subcellularLocation>
        <location evidence="1">Cytoplasm</location>
    </subcellularLocation>
</comment>
<keyword id="KW-0032">Aminotransferase</keyword>
<keyword id="KW-0963">Cytoplasm</keyword>
<keyword id="KW-0315">Glutamine amidotransferase</keyword>
<keyword id="KW-1185">Reference proteome</keyword>
<keyword id="KW-0677">Repeat</keyword>
<keyword id="KW-0808">Transferase</keyword>
<protein>
    <recommendedName>
        <fullName evidence="1">Glutamine--fructose-6-phosphate aminotransferase [isomerizing]</fullName>
        <ecNumber evidence="1">2.6.1.16</ecNumber>
    </recommendedName>
    <alternativeName>
        <fullName evidence="1">D-fructose-6-phosphate amidotransferase</fullName>
    </alternativeName>
    <alternativeName>
        <fullName evidence="1">GFAT</fullName>
    </alternativeName>
    <alternativeName>
        <fullName evidence="1">Glucosamine-6-phosphate synthase</fullName>
    </alternativeName>
    <alternativeName>
        <fullName evidence="1">Hexosephosphate aminotransferase</fullName>
    </alternativeName>
    <alternativeName>
        <fullName evidence="1">L-glutamine--D-fructose-6-phosphate amidotransferase</fullName>
    </alternativeName>
</protein>
<accession>P44708</accession>
<feature type="initiator methionine" description="Removed" evidence="1">
    <location>
        <position position="1"/>
    </location>
</feature>
<feature type="chain" id="PRO_0000135339" description="Glutamine--fructose-6-phosphate aminotransferase [isomerizing]">
    <location>
        <begin position="2"/>
        <end position="610"/>
    </location>
</feature>
<feature type="domain" description="Glutamine amidotransferase type-2" evidence="1">
    <location>
        <begin position="2"/>
        <end position="218"/>
    </location>
</feature>
<feature type="domain" description="SIS 1" evidence="1">
    <location>
        <begin position="278"/>
        <end position="426"/>
    </location>
</feature>
<feature type="domain" description="SIS 2" evidence="1">
    <location>
        <begin position="459"/>
        <end position="600"/>
    </location>
</feature>
<feature type="active site" description="Nucleophile; for GATase activity" evidence="1">
    <location>
        <position position="2"/>
    </location>
</feature>
<feature type="active site" description="For Fru-6P isomerization activity" evidence="1">
    <location>
        <position position="605"/>
    </location>
</feature>
<dbReference type="EC" id="2.6.1.16" evidence="1"/>
<dbReference type="EMBL" id="L42023">
    <property type="protein sequence ID" value="AAC22088.1"/>
    <property type="molecule type" value="Genomic_DNA"/>
</dbReference>
<dbReference type="PIR" id="D64067">
    <property type="entry name" value="D64067"/>
</dbReference>
<dbReference type="RefSeq" id="NP_438590.1">
    <property type="nucleotide sequence ID" value="NC_000907.1"/>
</dbReference>
<dbReference type="SMR" id="P44708"/>
<dbReference type="STRING" id="71421.HI_0429"/>
<dbReference type="EnsemblBacteria" id="AAC22088">
    <property type="protein sequence ID" value="AAC22088"/>
    <property type="gene ID" value="HI_0429"/>
</dbReference>
<dbReference type="KEGG" id="hin:HI_0429"/>
<dbReference type="PATRIC" id="fig|71421.8.peg.449"/>
<dbReference type="eggNOG" id="COG0449">
    <property type="taxonomic scope" value="Bacteria"/>
</dbReference>
<dbReference type="HOGENOM" id="CLU_012520_5_2_6"/>
<dbReference type="OrthoDB" id="9761808at2"/>
<dbReference type="PhylomeDB" id="P44708"/>
<dbReference type="BioCyc" id="HINF71421:G1GJ1-444-MONOMER"/>
<dbReference type="Proteomes" id="UP000000579">
    <property type="component" value="Chromosome"/>
</dbReference>
<dbReference type="GO" id="GO:0005829">
    <property type="term" value="C:cytosol"/>
    <property type="evidence" value="ECO:0000318"/>
    <property type="project" value="GO_Central"/>
</dbReference>
<dbReference type="GO" id="GO:0097367">
    <property type="term" value="F:carbohydrate derivative binding"/>
    <property type="evidence" value="ECO:0007669"/>
    <property type="project" value="InterPro"/>
</dbReference>
<dbReference type="GO" id="GO:0004360">
    <property type="term" value="F:glutamine-fructose-6-phosphate transaminase (isomerizing) activity"/>
    <property type="evidence" value="ECO:0000318"/>
    <property type="project" value="GO_Central"/>
</dbReference>
<dbReference type="GO" id="GO:0005975">
    <property type="term" value="P:carbohydrate metabolic process"/>
    <property type="evidence" value="ECO:0007669"/>
    <property type="project" value="UniProtKB-UniRule"/>
</dbReference>
<dbReference type="GO" id="GO:0006002">
    <property type="term" value="P:fructose 6-phosphate metabolic process"/>
    <property type="evidence" value="ECO:0000318"/>
    <property type="project" value="GO_Central"/>
</dbReference>
<dbReference type="GO" id="GO:0006487">
    <property type="term" value="P:protein N-linked glycosylation"/>
    <property type="evidence" value="ECO:0000318"/>
    <property type="project" value="GO_Central"/>
</dbReference>
<dbReference type="GO" id="GO:0006047">
    <property type="term" value="P:UDP-N-acetylglucosamine metabolic process"/>
    <property type="evidence" value="ECO:0000318"/>
    <property type="project" value="GO_Central"/>
</dbReference>
<dbReference type="CDD" id="cd00714">
    <property type="entry name" value="GFAT"/>
    <property type="match status" value="1"/>
</dbReference>
<dbReference type="CDD" id="cd05008">
    <property type="entry name" value="SIS_GlmS_GlmD_1"/>
    <property type="match status" value="1"/>
</dbReference>
<dbReference type="CDD" id="cd05009">
    <property type="entry name" value="SIS_GlmS_GlmD_2"/>
    <property type="match status" value="1"/>
</dbReference>
<dbReference type="FunFam" id="3.40.50.10490:FF:000001">
    <property type="entry name" value="Glutamine--fructose-6-phosphate aminotransferase [isomerizing]"/>
    <property type="match status" value="1"/>
</dbReference>
<dbReference type="FunFam" id="3.40.50.10490:FF:000002">
    <property type="entry name" value="Glutamine--fructose-6-phosphate aminotransferase [isomerizing]"/>
    <property type="match status" value="1"/>
</dbReference>
<dbReference type="FunFam" id="3.60.20.10:FF:000006">
    <property type="entry name" value="Glutamine--fructose-6-phosphate aminotransferase [isomerizing]"/>
    <property type="match status" value="1"/>
</dbReference>
<dbReference type="Gene3D" id="3.40.50.10490">
    <property type="entry name" value="Glucose-6-phosphate isomerase like protein, domain 1"/>
    <property type="match status" value="2"/>
</dbReference>
<dbReference type="Gene3D" id="3.60.20.10">
    <property type="entry name" value="Glutamine Phosphoribosylpyrophosphate, subunit 1, domain 1"/>
    <property type="match status" value="1"/>
</dbReference>
<dbReference type="HAMAP" id="MF_00164">
    <property type="entry name" value="GlmS"/>
    <property type="match status" value="1"/>
</dbReference>
<dbReference type="InterPro" id="IPR017932">
    <property type="entry name" value="GATase_2_dom"/>
</dbReference>
<dbReference type="InterPro" id="IPR005855">
    <property type="entry name" value="GFAT"/>
</dbReference>
<dbReference type="InterPro" id="IPR047084">
    <property type="entry name" value="GFAT_N"/>
</dbReference>
<dbReference type="InterPro" id="IPR035466">
    <property type="entry name" value="GlmS/AgaS_SIS"/>
</dbReference>
<dbReference type="InterPro" id="IPR035490">
    <property type="entry name" value="GlmS/FrlB_SIS"/>
</dbReference>
<dbReference type="InterPro" id="IPR029055">
    <property type="entry name" value="Ntn_hydrolases_N"/>
</dbReference>
<dbReference type="InterPro" id="IPR001347">
    <property type="entry name" value="SIS_dom"/>
</dbReference>
<dbReference type="InterPro" id="IPR046348">
    <property type="entry name" value="SIS_dom_sf"/>
</dbReference>
<dbReference type="NCBIfam" id="TIGR01135">
    <property type="entry name" value="glmS"/>
    <property type="match status" value="1"/>
</dbReference>
<dbReference type="NCBIfam" id="NF001484">
    <property type="entry name" value="PRK00331.1"/>
    <property type="match status" value="1"/>
</dbReference>
<dbReference type="PANTHER" id="PTHR10937">
    <property type="entry name" value="GLUCOSAMINE--FRUCTOSE-6-PHOSPHATE AMINOTRANSFERASE, ISOMERIZING"/>
    <property type="match status" value="1"/>
</dbReference>
<dbReference type="PANTHER" id="PTHR10937:SF0">
    <property type="entry name" value="GLUTAMINE--FRUCTOSE-6-PHOSPHATE TRANSAMINASE (ISOMERIZING)"/>
    <property type="match status" value="1"/>
</dbReference>
<dbReference type="Pfam" id="PF13522">
    <property type="entry name" value="GATase_6"/>
    <property type="match status" value="1"/>
</dbReference>
<dbReference type="Pfam" id="PF01380">
    <property type="entry name" value="SIS"/>
    <property type="match status" value="2"/>
</dbReference>
<dbReference type="SUPFAM" id="SSF56235">
    <property type="entry name" value="N-terminal nucleophile aminohydrolases (Ntn hydrolases)"/>
    <property type="match status" value="1"/>
</dbReference>
<dbReference type="SUPFAM" id="SSF53697">
    <property type="entry name" value="SIS domain"/>
    <property type="match status" value="1"/>
</dbReference>
<dbReference type="PROSITE" id="PS51278">
    <property type="entry name" value="GATASE_TYPE_2"/>
    <property type="match status" value="1"/>
</dbReference>
<dbReference type="PROSITE" id="PS51464">
    <property type="entry name" value="SIS"/>
    <property type="match status" value="2"/>
</dbReference>
<organism>
    <name type="scientific">Haemophilus influenzae (strain ATCC 51907 / DSM 11121 / KW20 / Rd)</name>
    <dbReference type="NCBI Taxonomy" id="71421"/>
    <lineage>
        <taxon>Bacteria</taxon>
        <taxon>Pseudomonadati</taxon>
        <taxon>Pseudomonadota</taxon>
        <taxon>Gammaproteobacteria</taxon>
        <taxon>Pasteurellales</taxon>
        <taxon>Pasteurellaceae</taxon>
        <taxon>Haemophilus</taxon>
    </lineage>
</organism>
<evidence type="ECO:0000255" key="1">
    <source>
        <dbReference type="HAMAP-Rule" id="MF_00164"/>
    </source>
</evidence>
<proteinExistence type="inferred from homology"/>
<sequence>MCGIVGAVAQRDVAEILINGLHRLEYRGYDSAGVAVINKQNELQRIRCLGKVKALDEAVSEKPLIGGTGIAHTRWATHGEPSETNAHPHSSGTFAVVHNGIIENHEELRELLKSRGYVFLSQTDTEVIAHLVEWEMRTTDSLLDAVKKAVKQLTGAYGMVVMDSRHPEHLVAARSGSPLVIGLGIGENFLASDQLALLSVTRRFIFLEEGDIAEITRRTVDIYDTHGNKAKREIHESNLENDAAEKGKFRHFMQKEIYEQPTALINTMEGRINHENVIVDSIGNGAKGILEKVEHIQIVACGTSYNAGMVARYWFESLAGVSCDVEIASEFRYRKFVTRPNSLLITLSQSGETADTLAALRLAKEKGYMAALTICNVAGSSLVRESDLAFMTRAGVEVGVASTKAFTTQLAALLMLVTALGKVKGHISVEKEREIIKAMQSLPAEIEKALAFDTEIEALAEDFAEKHHALFLGRGAFYPIAVEASLKLKEISYIHAEAYAAGELKHGPLALIDADMPVIVVAPNNELLEKVKSNIEEVRARGGQLYVFADKEAGFTPSEGMKIITMPKVNDIVAPIFYTIPMQLLSYYVALIKGTDVDQPRNLAKSVTVE</sequence>
<reference key="1">
    <citation type="journal article" date="1995" name="Science">
        <title>Whole-genome random sequencing and assembly of Haemophilus influenzae Rd.</title>
        <authorList>
            <person name="Fleischmann R.D."/>
            <person name="Adams M.D."/>
            <person name="White O."/>
            <person name="Clayton R.A."/>
            <person name="Kirkness E.F."/>
            <person name="Kerlavage A.R."/>
            <person name="Bult C.J."/>
            <person name="Tomb J.-F."/>
            <person name="Dougherty B.A."/>
            <person name="Merrick J.M."/>
            <person name="McKenney K."/>
            <person name="Sutton G.G."/>
            <person name="FitzHugh W."/>
            <person name="Fields C.A."/>
            <person name="Gocayne J.D."/>
            <person name="Scott J.D."/>
            <person name="Shirley R."/>
            <person name="Liu L.-I."/>
            <person name="Glodek A."/>
            <person name="Kelley J.M."/>
            <person name="Weidman J.F."/>
            <person name="Phillips C.A."/>
            <person name="Spriggs T."/>
            <person name="Hedblom E."/>
            <person name="Cotton M.D."/>
            <person name="Utterback T.R."/>
            <person name="Hanna M.C."/>
            <person name="Nguyen D.T."/>
            <person name="Saudek D.M."/>
            <person name="Brandon R.C."/>
            <person name="Fine L.D."/>
            <person name="Fritchman J.L."/>
            <person name="Fuhrmann J.L."/>
            <person name="Geoghagen N.S.M."/>
            <person name="Gnehm C.L."/>
            <person name="McDonald L.A."/>
            <person name="Small K.V."/>
            <person name="Fraser C.M."/>
            <person name="Smith H.O."/>
            <person name="Venter J.C."/>
        </authorList>
    </citation>
    <scope>NUCLEOTIDE SEQUENCE [LARGE SCALE GENOMIC DNA]</scope>
    <source>
        <strain>ATCC 51907 / DSM 11121 / KW20 / Rd</strain>
    </source>
</reference>
<name>GLMS_HAEIN</name>
<gene>
    <name evidence="1" type="primary">glmS</name>
    <name type="ordered locus">HI_0429</name>
</gene>